<keyword id="KW-0002">3D-structure</keyword>
<keyword id="KW-0007">Acetylation</keyword>
<keyword id="KW-0025">Alternative splicing</keyword>
<keyword id="KW-0963">Cytoplasm</keyword>
<keyword id="KW-0968">Cytoplasmic vesicle</keyword>
<keyword id="KW-0903">Direct protein sequencing</keyword>
<keyword id="KW-0931">ER-Golgi transport</keyword>
<keyword id="KW-0333">Golgi apparatus</keyword>
<keyword id="KW-0472">Membrane</keyword>
<keyword id="KW-0653">Protein transport</keyword>
<keyword id="KW-1267">Proteomics identification</keyword>
<keyword id="KW-1185">Reference proteome</keyword>
<keyword id="KW-0813">Transport</keyword>
<organism>
    <name type="scientific">Homo sapiens</name>
    <name type="common">Human</name>
    <dbReference type="NCBI Taxonomy" id="9606"/>
    <lineage>
        <taxon>Eukaryota</taxon>
        <taxon>Metazoa</taxon>
        <taxon>Chordata</taxon>
        <taxon>Craniata</taxon>
        <taxon>Vertebrata</taxon>
        <taxon>Euteleostomi</taxon>
        <taxon>Mammalia</taxon>
        <taxon>Eutheria</taxon>
        <taxon>Euarchontoglires</taxon>
        <taxon>Primates</taxon>
        <taxon>Haplorrhini</taxon>
        <taxon>Catarrhini</taxon>
        <taxon>Hominidae</taxon>
        <taxon>Homo</taxon>
    </lineage>
</organism>
<dbReference type="EMBL" id="AB047848">
    <property type="protein sequence ID" value="BAB17659.1"/>
    <property type="molecule type" value="mRNA"/>
</dbReference>
<dbReference type="EMBL" id="AF151878">
    <property type="protein sequence ID" value="AAD34115.1"/>
    <property type="molecule type" value="mRNA"/>
</dbReference>
<dbReference type="EMBL" id="AF161529">
    <property type="protein sequence ID" value="AAF29144.1"/>
    <property type="molecule type" value="mRNA"/>
</dbReference>
<dbReference type="EMBL" id="AF086911">
    <property type="protein sequence ID" value="AAP97141.1"/>
    <property type="molecule type" value="mRNA"/>
</dbReference>
<dbReference type="EMBL" id="AK293377">
    <property type="protein sequence ID" value="BAG56889.1"/>
    <property type="molecule type" value="mRNA"/>
</dbReference>
<dbReference type="EMBL" id="AK295325">
    <property type="protein sequence ID" value="BAG58302.1"/>
    <property type="molecule type" value="mRNA"/>
</dbReference>
<dbReference type="EMBL" id="AC078778">
    <property type="status" value="NOT_ANNOTATED_CDS"/>
    <property type="molecule type" value="Genomic_DNA"/>
</dbReference>
<dbReference type="EMBL" id="CH471054">
    <property type="protein sequence ID" value="EAW96774.1"/>
    <property type="molecule type" value="Genomic_DNA"/>
</dbReference>
<dbReference type="EMBL" id="BC002849">
    <property type="protein sequence ID" value="AAH02849.1"/>
    <property type="molecule type" value="mRNA"/>
</dbReference>
<dbReference type="CCDS" id="CCDS61137.1">
    <molecule id="P61923-5"/>
</dbReference>
<dbReference type="CCDS" id="CCDS61138.1">
    <molecule id="P61923-3"/>
</dbReference>
<dbReference type="CCDS" id="CCDS61139.1">
    <molecule id="P61923-4"/>
</dbReference>
<dbReference type="CCDS" id="CCDS8877.1">
    <molecule id="P61923-1"/>
</dbReference>
<dbReference type="RefSeq" id="NP_001258663.1">
    <molecule id="P61923-3"/>
    <property type="nucleotide sequence ID" value="NM_001271734.2"/>
</dbReference>
<dbReference type="RefSeq" id="NP_001258664.1">
    <molecule id="P61923-5"/>
    <property type="nucleotide sequence ID" value="NM_001271735.2"/>
</dbReference>
<dbReference type="RefSeq" id="NP_001258665.1">
    <molecule id="P61923-4"/>
    <property type="nucleotide sequence ID" value="NM_001271736.2"/>
</dbReference>
<dbReference type="RefSeq" id="NP_057141.1">
    <molecule id="P61923-1"/>
    <property type="nucleotide sequence ID" value="NM_016057.3"/>
</dbReference>
<dbReference type="PDB" id="2HF6">
    <property type="method" value="NMR"/>
    <property type="chains" value="A=1-149"/>
</dbReference>
<dbReference type="PDB" id="5MC7">
    <property type="method" value="X-ray"/>
    <property type="resolution" value="1.60 A"/>
    <property type="chains" value="A/B=7-150"/>
</dbReference>
<dbReference type="PDBsum" id="2HF6"/>
<dbReference type="PDBsum" id="5MC7"/>
<dbReference type="BMRB" id="P61923"/>
<dbReference type="SMR" id="P61923"/>
<dbReference type="BioGRID" id="116495">
    <property type="interactions" value="144"/>
</dbReference>
<dbReference type="ComplexPortal" id="CPX-7803">
    <property type="entry name" value="COPI vesicle coat complex, COPG1-COPZ1 variant"/>
</dbReference>
<dbReference type="ComplexPortal" id="CPX-7969">
    <property type="entry name" value="COPI vesicle coat complex, COPG2-COPZ1 variant"/>
</dbReference>
<dbReference type="DIP" id="DIP-29873N"/>
<dbReference type="FunCoup" id="P61923">
    <property type="interactions" value="2486"/>
</dbReference>
<dbReference type="IntAct" id="P61923">
    <property type="interactions" value="77"/>
</dbReference>
<dbReference type="STRING" id="9606.ENSP00000449270"/>
<dbReference type="GlyGen" id="P61923">
    <property type="glycosylation" value="1 site, 1 O-linked glycan (1 site)"/>
</dbReference>
<dbReference type="iPTMnet" id="P61923"/>
<dbReference type="MetOSite" id="P61923"/>
<dbReference type="PhosphoSitePlus" id="P61923"/>
<dbReference type="BioMuta" id="COPZ1"/>
<dbReference type="DMDM" id="48428830"/>
<dbReference type="jPOST" id="P61923"/>
<dbReference type="MassIVE" id="P61923"/>
<dbReference type="PaxDb" id="9606-ENSP00000449270"/>
<dbReference type="PeptideAtlas" id="P61923"/>
<dbReference type="ProteomicsDB" id="28529"/>
<dbReference type="ProteomicsDB" id="28992"/>
<dbReference type="ProteomicsDB" id="3904"/>
<dbReference type="ProteomicsDB" id="4260"/>
<dbReference type="ProteomicsDB" id="57338">
    <molecule id="P61923-1"/>
</dbReference>
<dbReference type="Pumba" id="P61923"/>
<dbReference type="TopDownProteomics" id="P61923-1">
    <molecule id="P61923-1"/>
</dbReference>
<dbReference type="Antibodypedia" id="27430">
    <property type="antibodies" value="216 antibodies from 25 providers"/>
</dbReference>
<dbReference type="DNASU" id="22818"/>
<dbReference type="Ensembl" id="ENST00000262061.7">
    <molecule id="P61923-1"/>
    <property type="protein sequence ID" value="ENSP00000262061.2"/>
    <property type="gene ID" value="ENSG00000111481.10"/>
</dbReference>
<dbReference type="Ensembl" id="ENST00000455864.6">
    <molecule id="P61923-3"/>
    <property type="protein sequence ID" value="ENSP00000410620.2"/>
    <property type="gene ID" value="ENSG00000111481.10"/>
</dbReference>
<dbReference type="Ensembl" id="ENST00000549043.5">
    <molecule id="P61923-4"/>
    <property type="protein sequence ID" value="ENSP00000449270.1"/>
    <property type="gene ID" value="ENSG00000111481.10"/>
</dbReference>
<dbReference type="Ensembl" id="ENST00000552362.5">
    <molecule id="P61923-5"/>
    <property type="protein sequence ID" value="ENSP00000448444.1"/>
    <property type="gene ID" value="ENSG00000111481.10"/>
</dbReference>
<dbReference type="GeneID" id="22818"/>
<dbReference type="KEGG" id="hsa:22818"/>
<dbReference type="MANE-Select" id="ENST00000262061.7">
    <property type="protein sequence ID" value="ENSP00000262061.2"/>
    <property type="RefSeq nucleotide sequence ID" value="NM_016057.3"/>
    <property type="RefSeq protein sequence ID" value="NP_057141.1"/>
</dbReference>
<dbReference type="UCSC" id="uc001sfs.3">
    <molecule id="P61923-1"/>
    <property type="organism name" value="human"/>
</dbReference>
<dbReference type="AGR" id="HGNC:2243"/>
<dbReference type="CTD" id="22818"/>
<dbReference type="DisGeNET" id="22818"/>
<dbReference type="GeneCards" id="COPZ1"/>
<dbReference type="HGNC" id="HGNC:2243">
    <property type="gene designation" value="COPZ1"/>
</dbReference>
<dbReference type="HPA" id="ENSG00000111481">
    <property type="expression patterns" value="Low tissue specificity"/>
</dbReference>
<dbReference type="MIM" id="615472">
    <property type="type" value="gene"/>
</dbReference>
<dbReference type="neXtProt" id="NX_P61923"/>
<dbReference type="OpenTargets" id="ENSG00000111481"/>
<dbReference type="PharmGKB" id="PA26760"/>
<dbReference type="VEuPathDB" id="HostDB:ENSG00000111481"/>
<dbReference type="eggNOG" id="KOG3343">
    <property type="taxonomic scope" value="Eukaryota"/>
</dbReference>
<dbReference type="GeneTree" id="ENSGT00390000004405"/>
<dbReference type="HOGENOM" id="CLU_086803_2_0_1"/>
<dbReference type="InParanoid" id="P61923"/>
<dbReference type="OMA" id="NELMLHS"/>
<dbReference type="OrthoDB" id="10249988at2759"/>
<dbReference type="PAN-GO" id="P61923">
    <property type="GO annotations" value="4 GO annotations based on evolutionary models"/>
</dbReference>
<dbReference type="PhylomeDB" id="P61923"/>
<dbReference type="TreeFam" id="TF300262"/>
<dbReference type="PathwayCommons" id="P61923"/>
<dbReference type="Reactome" id="R-HSA-6807878">
    <property type="pathway name" value="COPI-mediated anterograde transport"/>
</dbReference>
<dbReference type="Reactome" id="R-HSA-6811434">
    <property type="pathway name" value="COPI-dependent Golgi-to-ER retrograde traffic"/>
</dbReference>
<dbReference type="SignaLink" id="P61923"/>
<dbReference type="BioGRID-ORCS" id="22818">
    <property type="hits" value="766 hits in 1160 CRISPR screens"/>
</dbReference>
<dbReference type="CD-CODE" id="91857CE7">
    <property type="entry name" value="Nucleolus"/>
</dbReference>
<dbReference type="ChiTaRS" id="COPZ1">
    <property type="organism name" value="human"/>
</dbReference>
<dbReference type="EvolutionaryTrace" id="P61923"/>
<dbReference type="GeneWiki" id="COPZ1"/>
<dbReference type="GenomeRNAi" id="22818"/>
<dbReference type="Pharos" id="P61923">
    <property type="development level" value="Tbio"/>
</dbReference>
<dbReference type="PRO" id="PR:P61923"/>
<dbReference type="Proteomes" id="UP000005640">
    <property type="component" value="Chromosome 12"/>
</dbReference>
<dbReference type="RNAct" id="P61923">
    <property type="molecule type" value="protein"/>
</dbReference>
<dbReference type="Bgee" id="ENSG00000111481">
    <property type="expression patterns" value="Expressed in islet of Langerhans and 204 other cell types or tissues"/>
</dbReference>
<dbReference type="ExpressionAtlas" id="P61923">
    <property type="expression patterns" value="baseline and differential"/>
</dbReference>
<dbReference type="GO" id="GO:0030126">
    <property type="term" value="C:COPI vesicle coat"/>
    <property type="evidence" value="ECO:0000314"/>
    <property type="project" value="UniProtKB"/>
</dbReference>
<dbReference type="GO" id="GO:0005829">
    <property type="term" value="C:cytosol"/>
    <property type="evidence" value="ECO:0000304"/>
    <property type="project" value="Reactome"/>
</dbReference>
<dbReference type="GO" id="GO:0005789">
    <property type="term" value="C:endoplasmic reticulum membrane"/>
    <property type="evidence" value="ECO:0000304"/>
    <property type="project" value="Reactome"/>
</dbReference>
<dbReference type="GO" id="GO:0000139">
    <property type="term" value="C:Golgi membrane"/>
    <property type="evidence" value="ECO:0000304"/>
    <property type="project" value="Reactome"/>
</dbReference>
<dbReference type="GO" id="GO:0030133">
    <property type="term" value="C:transport vesicle"/>
    <property type="evidence" value="ECO:0000304"/>
    <property type="project" value="Reactome"/>
</dbReference>
<dbReference type="GO" id="GO:0006891">
    <property type="term" value="P:intra-Golgi vesicle-mediated transport"/>
    <property type="evidence" value="ECO:0000314"/>
    <property type="project" value="UniProtKB"/>
</dbReference>
<dbReference type="GO" id="GO:0006886">
    <property type="term" value="P:intracellular protein transport"/>
    <property type="evidence" value="ECO:0000318"/>
    <property type="project" value="GO_Central"/>
</dbReference>
<dbReference type="GO" id="GO:0006890">
    <property type="term" value="P:retrograde vesicle-mediated transport, Golgi to endoplasmic reticulum"/>
    <property type="evidence" value="ECO:0000318"/>
    <property type="project" value="GO_Central"/>
</dbReference>
<dbReference type="CDD" id="cd14829">
    <property type="entry name" value="Zeta-COP"/>
    <property type="match status" value="1"/>
</dbReference>
<dbReference type="FunFam" id="3.30.450.60:FF:000008">
    <property type="entry name" value="Coatomer subunit zeta-1 isoform 1"/>
    <property type="match status" value="1"/>
</dbReference>
<dbReference type="Gene3D" id="3.30.450.60">
    <property type="match status" value="1"/>
</dbReference>
<dbReference type="InterPro" id="IPR022775">
    <property type="entry name" value="AP_mu_sigma_su"/>
</dbReference>
<dbReference type="InterPro" id="IPR000804">
    <property type="entry name" value="Clathrin_sm-chain_CS"/>
</dbReference>
<dbReference type="InterPro" id="IPR039652">
    <property type="entry name" value="Coatomer_zeta"/>
</dbReference>
<dbReference type="InterPro" id="IPR011012">
    <property type="entry name" value="Longin-like_dom_sf"/>
</dbReference>
<dbReference type="PANTHER" id="PTHR11043:SF2">
    <property type="entry name" value="COATOMER SUBUNIT ZETA-1"/>
    <property type="match status" value="1"/>
</dbReference>
<dbReference type="PANTHER" id="PTHR11043">
    <property type="entry name" value="ZETA-COAT PROTEIN"/>
    <property type="match status" value="1"/>
</dbReference>
<dbReference type="Pfam" id="PF01217">
    <property type="entry name" value="Clat_adaptor_s"/>
    <property type="match status" value="1"/>
</dbReference>
<dbReference type="SUPFAM" id="SSF64356">
    <property type="entry name" value="SNARE-like"/>
    <property type="match status" value="1"/>
</dbReference>
<dbReference type="PROSITE" id="PS00989">
    <property type="entry name" value="CLAT_ADAPTOR_S"/>
    <property type="match status" value="1"/>
</dbReference>
<name>COPZ1_HUMAN</name>
<comment type="function">
    <text evidence="2">The coatomer is a cytosolic protein complex that binds to dilysine motifs and reversibly associates with Golgi non-clathrin-coated vesicles, which further mediate biosynthetic protein transport from the ER, via the Golgi up to the trans Golgi network. Coatomer complex is required for budding from Golgi membranes, and is essential for the retrograde Golgi-to-ER transport of dilysine-tagged proteins (By similarity). The zeta subunit may be involved in regulating the coat assembly and, hence, the rate of biosynthetic protein transport due to its association-dissociation properties with the coatomer complex (By similarity).</text>
</comment>
<comment type="subunit">
    <text evidence="3">Oligomeric complex that consists of at least the alpha, beta, beta', gamma, delta, epsilon and zeta subunits.</text>
</comment>
<comment type="subcellular location">
    <subcellularLocation>
        <location evidence="1">Cytoplasm</location>
    </subcellularLocation>
    <subcellularLocation>
        <location evidence="1">Golgi apparatus membrane</location>
        <topology evidence="1">Peripheral membrane protein</topology>
        <orientation evidence="1">Cytoplasmic side</orientation>
    </subcellularLocation>
    <subcellularLocation>
        <location evidence="1">Cytoplasmic vesicle</location>
        <location evidence="1">COPI-coated vesicle membrane</location>
        <topology evidence="1">Peripheral membrane protein</topology>
        <orientation evidence="1">Cytoplasmic side</orientation>
    </subcellularLocation>
    <text evidence="1">The coatomer is cytoplasmic or polymerized on the cytoplasmic side of the Golgi, as well as on the vesicles/buds originating from it.</text>
</comment>
<comment type="alternative products">
    <event type="alternative splicing"/>
    <isoform>
        <id>P61923-1</id>
        <name>1</name>
        <sequence type="displayed"/>
    </isoform>
    <isoform>
        <id>P61923-2</id>
        <name>2</name>
        <sequence type="described" ref="VSP_053675 VSP_053676"/>
    </isoform>
    <isoform>
        <id>P61923-3</id>
        <name>3</name>
        <sequence type="described" ref="VSP_055050"/>
    </isoform>
    <isoform>
        <id>P61923-4</id>
        <name>4</name>
        <sequence type="described" ref="VSP_055049"/>
    </isoform>
    <isoform>
        <id>P61923-5</id>
        <name>5</name>
        <sequence type="described" ref="VSP_055051"/>
    </isoform>
</comment>
<comment type="similarity">
    <text evidence="6">Belongs to the adaptor complexes small subunit family.</text>
</comment>
<proteinExistence type="evidence at protein level"/>
<gene>
    <name type="primary">COPZ1</name>
    <name type="synonym">COPZ</name>
    <name type="ORF">CGI-120</name>
    <name type="ORF">HSPC181</name>
</gene>
<reference key="1">
    <citation type="journal article" date="2000" name="J. Biochem.">
        <title>Identification and characterization of novel isoforms of COP I subunits.</title>
        <authorList>
            <person name="Futatsumori M."/>
            <person name="Kasai K."/>
            <person name="Takatsu H."/>
            <person name="Shin H.-W."/>
            <person name="Nakayama K."/>
        </authorList>
    </citation>
    <scope>NUCLEOTIDE SEQUENCE [MRNA] (ISOFORM 1)</scope>
</reference>
<reference key="2">
    <citation type="journal article" date="2000" name="Genome Res.">
        <title>Identification of novel human genes evolutionarily conserved in Caenorhabditis elegans by comparative proteomics.</title>
        <authorList>
            <person name="Lai C.-H."/>
            <person name="Chou C.-Y."/>
            <person name="Ch'ang L.-Y."/>
            <person name="Liu C.-S."/>
            <person name="Lin W.-C."/>
        </authorList>
    </citation>
    <scope>NUCLEOTIDE SEQUENCE [LARGE SCALE MRNA] (ISOFORM 1)</scope>
</reference>
<reference key="3">
    <citation type="journal article" date="2000" name="Genome Res.">
        <title>Cloning and functional analysis of cDNAs with open reading frames for 300 previously undefined genes expressed in CD34+ hematopoietic stem/progenitor cells.</title>
        <authorList>
            <person name="Zhang Q.-H."/>
            <person name="Ye M."/>
            <person name="Wu X.-Y."/>
            <person name="Ren S.-X."/>
            <person name="Zhao M."/>
            <person name="Zhao C.-J."/>
            <person name="Fu G."/>
            <person name="Shen Y."/>
            <person name="Fan H.-Y."/>
            <person name="Lu G."/>
            <person name="Zhong M."/>
            <person name="Xu X.-R."/>
            <person name="Han Z.-G."/>
            <person name="Zhang J.-W."/>
            <person name="Tao J."/>
            <person name="Huang Q.-H."/>
            <person name="Zhou J."/>
            <person name="Hu G.-X."/>
            <person name="Gu J."/>
            <person name="Chen S.-J."/>
            <person name="Chen Z."/>
        </authorList>
    </citation>
    <scope>NUCLEOTIDE SEQUENCE [LARGE SCALE MRNA] (ISOFORM 1)</scope>
    <source>
        <tissue>Umbilical cord blood</tissue>
    </source>
</reference>
<reference key="4">
    <citation type="submission" date="2003-07" db="EMBL/GenBank/DDBJ databases">
        <title>Cloning and expression of a new human cDNA homology to B.taurus z-cop mRNA.</title>
        <authorList>
            <person name="Tu Q."/>
            <person name="Yu L."/>
            <person name="Hu P.R."/>
            <person name="Zhang H.L."/>
            <person name="Huang J."/>
            <person name="Zhao S.Y."/>
        </authorList>
    </citation>
    <scope>NUCLEOTIDE SEQUENCE [MRNA] (ISOFORM 1)</scope>
</reference>
<reference key="5">
    <citation type="journal article" date="2004" name="Nat. Genet.">
        <title>Complete sequencing and characterization of 21,243 full-length human cDNAs.</title>
        <authorList>
            <person name="Ota T."/>
            <person name="Suzuki Y."/>
            <person name="Nishikawa T."/>
            <person name="Otsuki T."/>
            <person name="Sugiyama T."/>
            <person name="Irie R."/>
            <person name="Wakamatsu A."/>
            <person name="Hayashi K."/>
            <person name="Sato H."/>
            <person name="Nagai K."/>
            <person name="Kimura K."/>
            <person name="Makita H."/>
            <person name="Sekine M."/>
            <person name="Obayashi M."/>
            <person name="Nishi T."/>
            <person name="Shibahara T."/>
            <person name="Tanaka T."/>
            <person name="Ishii S."/>
            <person name="Yamamoto J."/>
            <person name="Saito K."/>
            <person name="Kawai Y."/>
            <person name="Isono Y."/>
            <person name="Nakamura Y."/>
            <person name="Nagahari K."/>
            <person name="Murakami K."/>
            <person name="Yasuda T."/>
            <person name="Iwayanagi T."/>
            <person name="Wagatsuma M."/>
            <person name="Shiratori A."/>
            <person name="Sudo H."/>
            <person name="Hosoiri T."/>
            <person name="Kaku Y."/>
            <person name="Kodaira H."/>
            <person name="Kondo H."/>
            <person name="Sugawara M."/>
            <person name="Takahashi M."/>
            <person name="Kanda K."/>
            <person name="Yokoi T."/>
            <person name="Furuya T."/>
            <person name="Kikkawa E."/>
            <person name="Omura Y."/>
            <person name="Abe K."/>
            <person name="Kamihara K."/>
            <person name="Katsuta N."/>
            <person name="Sato K."/>
            <person name="Tanikawa M."/>
            <person name="Yamazaki M."/>
            <person name="Ninomiya K."/>
            <person name="Ishibashi T."/>
            <person name="Yamashita H."/>
            <person name="Murakawa K."/>
            <person name="Fujimori K."/>
            <person name="Tanai H."/>
            <person name="Kimata M."/>
            <person name="Watanabe M."/>
            <person name="Hiraoka S."/>
            <person name="Chiba Y."/>
            <person name="Ishida S."/>
            <person name="Ono Y."/>
            <person name="Takiguchi S."/>
            <person name="Watanabe S."/>
            <person name="Yosida M."/>
            <person name="Hotuta T."/>
            <person name="Kusano J."/>
            <person name="Kanehori K."/>
            <person name="Takahashi-Fujii A."/>
            <person name="Hara H."/>
            <person name="Tanase T.-O."/>
            <person name="Nomura Y."/>
            <person name="Togiya S."/>
            <person name="Komai F."/>
            <person name="Hara R."/>
            <person name="Takeuchi K."/>
            <person name="Arita M."/>
            <person name="Imose N."/>
            <person name="Musashino K."/>
            <person name="Yuuki H."/>
            <person name="Oshima A."/>
            <person name="Sasaki N."/>
            <person name="Aotsuka S."/>
            <person name="Yoshikawa Y."/>
            <person name="Matsunawa H."/>
            <person name="Ichihara T."/>
            <person name="Shiohata N."/>
            <person name="Sano S."/>
            <person name="Moriya S."/>
            <person name="Momiyama H."/>
            <person name="Satoh N."/>
            <person name="Takami S."/>
            <person name="Terashima Y."/>
            <person name="Suzuki O."/>
            <person name="Nakagawa S."/>
            <person name="Senoh A."/>
            <person name="Mizoguchi H."/>
            <person name="Goto Y."/>
            <person name="Shimizu F."/>
            <person name="Wakebe H."/>
            <person name="Hishigaki H."/>
            <person name="Watanabe T."/>
            <person name="Sugiyama A."/>
            <person name="Takemoto M."/>
            <person name="Kawakami B."/>
            <person name="Yamazaki M."/>
            <person name="Watanabe K."/>
            <person name="Kumagai A."/>
            <person name="Itakura S."/>
            <person name="Fukuzumi Y."/>
            <person name="Fujimori Y."/>
            <person name="Komiyama M."/>
            <person name="Tashiro H."/>
            <person name="Tanigami A."/>
            <person name="Fujiwara T."/>
            <person name="Ono T."/>
            <person name="Yamada K."/>
            <person name="Fujii Y."/>
            <person name="Ozaki K."/>
            <person name="Hirao M."/>
            <person name="Ohmori Y."/>
            <person name="Kawabata A."/>
            <person name="Hikiji T."/>
            <person name="Kobatake N."/>
            <person name="Inagaki H."/>
            <person name="Ikema Y."/>
            <person name="Okamoto S."/>
            <person name="Okitani R."/>
            <person name="Kawakami T."/>
            <person name="Noguchi S."/>
            <person name="Itoh T."/>
            <person name="Shigeta K."/>
            <person name="Senba T."/>
            <person name="Matsumura K."/>
            <person name="Nakajima Y."/>
            <person name="Mizuno T."/>
            <person name="Morinaga M."/>
            <person name="Sasaki M."/>
            <person name="Togashi T."/>
            <person name="Oyama M."/>
            <person name="Hata H."/>
            <person name="Watanabe M."/>
            <person name="Komatsu T."/>
            <person name="Mizushima-Sugano J."/>
            <person name="Satoh T."/>
            <person name="Shirai Y."/>
            <person name="Takahashi Y."/>
            <person name="Nakagawa K."/>
            <person name="Okumura K."/>
            <person name="Nagase T."/>
            <person name="Nomura N."/>
            <person name="Kikuchi H."/>
            <person name="Masuho Y."/>
            <person name="Yamashita R."/>
            <person name="Nakai K."/>
            <person name="Yada T."/>
            <person name="Nakamura Y."/>
            <person name="Ohara O."/>
            <person name="Isogai T."/>
            <person name="Sugano S."/>
        </authorList>
    </citation>
    <scope>NUCLEOTIDE SEQUENCE [LARGE SCALE MRNA] (ISOFORMS 2 AND 3)</scope>
    <source>
        <tissue>Caudate nucleus</tissue>
        <tissue>Urinary bladder</tissue>
    </source>
</reference>
<reference key="6">
    <citation type="journal article" date="2006" name="Nature">
        <title>The finished DNA sequence of human chromosome 12.</title>
        <authorList>
            <person name="Scherer S.E."/>
            <person name="Muzny D.M."/>
            <person name="Buhay C.J."/>
            <person name="Chen R."/>
            <person name="Cree A."/>
            <person name="Ding Y."/>
            <person name="Dugan-Rocha S."/>
            <person name="Gill R."/>
            <person name="Gunaratne P."/>
            <person name="Harris R.A."/>
            <person name="Hawes A.C."/>
            <person name="Hernandez J."/>
            <person name="Hodgson A.V."/>
            <person name="Hume J."/>
            <person name="Jackson A."/>
            <person name="Khan Z.M."/>
            <person name="Kovar-Smith C."/>
            <person name="Lewis L.R."/>
            <person name="Lozado R.J."/>
            <person name="Metzker M.L."/>
            <person name="Milosavljevic A."/>
            <person name="Miner G.R."/>
            <person name="Montgomery K.T."/>
            <person name="Morgan M.B."/>
            <person name="Nazareth L.V."/>
            <person name="Scott G."/>
            <person name="Sodergren E."/>
            <person name="Song X.-Z."/>
            <person name="Steffen D."/>
            <person name="Lovering R.C."/>
            <person name="Wheeler D.A."/>
            <person name="Worley K.C."/>
            <person name="Yuan Y."/>
            <person name="Zhang Z."/>
            <person name="Adams C.Q."/>
            <person name="Ansari-Lari M.A."/>
            <person name="Ayele M."/>
            <person name="Brown M.J."/>
            <person name="Chen G."/>
            <person name="Chen Z."/>
            <person name="Clerc-Blankenburg K.P."/>
            <person name="Davis C."/>
            <person name="Delgado O."/>
            <person name="Dinh H.H."/>
            <person name="Draper H."/>
            <person name="Gonzalez-Garay M.L."/>
            <person name="Havlak P."/>
            <person name="Jackson L.R."/>
            <person name="Jacob L.S."/>
            <person name="Kelly S.H."/>
            <person name="Li L."/>
            <person name="Li Z."/>
            <person name="Liu J."/>
            <person name="Liu W."/>
            <person name="Lu J."/>
            <person name="Maheshwari M."/>
            <person name="Nguyen B.-V."/>
            <person name="Okwuonu G.O."/>
            <person name="Pasternak S."/>
            <person name="Perez L.M."/>
            <person name="Plopper F.J.H."/>
            <person name="Santibanez J."/>
            <person name="Shen H."/>
            <person name="Tabor P.E."/>
            <person name="Verduzco D."/>
            <person name="Waldron L."/>
            <person name="Wang Q."/>
            <person name="Williams G.A."/>
            <person name="Zhang J."/>
            <person name="Zhou J."/>
            <person name="Allen C.C."/>
            <person name="Amin A.G."/>
            <person name="Anyalebechi V."/>
            <person name="Bailey M."/>
            <person name="Barbaria J.A."/>
            <person name="Bimage K.E."/>
            <person name="Bryant N.P."/>
            <person name="Burch P.E."/>
            <person name="Burkett C.E."/>
            <person name="Burrell K.L."/>
            <person name="Calderon E."/>
            <person name="Cardenas V."/>
            <person name="Carter K."/>
            <person name="Casias K."/>
            <person name="Cavazos I."/>
            <person name="Cavazos S.R."/>
            <person name="Ceasar H."/>
            <person name="Chacko J."/>
            <person name="Chan S.N."/>
            <person name="Chavez D."/>
            <person name="Christopoulos C."/>
            <person name="Chu J."/>
            <person name="Cockrell R."/>
            <person name="Cox C.D."/>
            <person name="Dang M."/>
            <person name="Dathorne S.R."/>
            <person name="David R."/>
            <person name="Davis C.M."/>
            <person name="Davy-Carroll L."/>
            <person name="Deshazo D.R."/>
            <person name="Donlin J.E."/>
            <person name="D'Souza L."/>
            <person name="Eaves K.A."/>
            <person name="Egan A."/>
            <person name="Emery-Cohen A.J."/>
            <person name="Escotto M."/>
            <person name="Flagg N."/>
            <person name="Forbes L.D."/>
            <person name="Gabisi A.M."/>
            <person name="Garza M."/>
            <person name="Hamilton C."/>
            <person name="Henderson N."/>
            <person name="Hernandez O."/>
            <person name="Hines S."/>
            <person name="Hogues M.E."/>
            <person name="Huang M."/>
            <person name="Idlebird D.G."/>
            <person name="Johnson R."/>
            <person name="Jolivet A."/>
            <person name="Jones S."/>
            <person name="Kagan R."/>
            <person name="King L.M."/>
            <person name="Leal B."/>
            <person name="Lebow H."/>
            <person name="Lee S."/>
            <person name="LeVan J.M."/>
            <person name="Lewis L.C."/>
            <person name="London P."/>
            <person name="Lorensuhewa L.M."/>
            <person name="Loulseged H."/>
            <person name="Lovett D.A."/>
            <person name="Lucier A."/>
            <person name="Lucier R.L."/>
            <person name="Ma J."/>
            <person name="Madu R.C."/>
            <person name="Mapua P."/>
            <person name="Martindale A.D."/>
            <person name="Martinez E."/>
            <person name="Massey E."/>
            <person name="Mawhiney S."/>
            <person name="Meador M.G."/>
            <person name="Mendez S."/>
            <person name="Mercado C."/>
            <person name="Mercado I.C."/>
            <person name="Merritt C.E."/>
            <person name="Miner Z.L."/>
            <person name="Minja E."/>
            <person name="Mitchell T."/>
            <person name="Mohabbat F."/>
            <person name="Mohabbat K."/>
            <person name="Montgomery B."/>
            <person name="Moore N."/>
            <person name="Morris S."/>
            <person name="Munidasa M."/>
            <person name="Ngo R.N."/>
            <person name="Nguyen N.B."/>
            <person name="Nickerson E."/>
            <person name="Nwaokelemeh O.O."/>
            <person name="Nwokenkwo S."/>
            <person name="Obregon M."/>
            <person name="Oguh M."/>
            <person name="Oragunye N."/>
            <person name="Oviedo R.J."/>
            <person name="Parish B.J."/>
            <person name="Parker D.N."/>
            <person name="Parrish J."/>
            <person name="Parks K.L."/>
            <person name="Paul H.A."/>
            <person name="Payton B.A."/>
            <person name="Perez A."/>
            <person name="Perrin W."/>
            <person name="Pickens A."/>
            <person name="Primus E.L."/>
            <person name="Pu L.-L."/>
            <person name="Puazo M."/>
            <person name="Quiles M.M."/>
            <person name="Quiroz J.B."/>
            <person name="Rabata D."/>
            <person name="Reeves K."/>
            <person name="Ruiz S.J."/>
            <person name="Shao H."/>
            <person name="Sisson I."/>
            <person name="Sonaike T."/>
            <person name="Sorelle R.P."/>
            <person name="Sutton A.E."/>
            <person name="Svatek A.F."/>
            <person name="Svetz L.A."/>
            <person name="Tamerisa K.S."/>
            <person name="Taylor T.R."/>
            <person name="Teague B."/>
            <person name="Thomas N."/>
            <person name="Thorn R.D."/>
            <person name="Trejos Z.Y."/>
            <person name="Trevino B.K."/>
            <person name="Ukegbu O.N."/>
            <person name="Urban J.B."/>
            <person name="Vasquez L.I."/>
            <person name="Vera V.A."/>
            <person name="Villasana D.M."/>
            <person name="Wang L."/>
            <person name="Ward-Moore S."/>
            <person name="Warren J.T."/>
            <person name="Wei X."/>
            <person name="White F."/>
            <person name="Williamson A.L."/>
            <person name="Wleczyk R."/>
            <person name="Wooden H.S."/>
            <person name="Wooden S.H."/>
            <person name="Yen J."/>
            <person name="Yoon L."/>
            <person name="Yoon V."/>
            <person name="Zorrilla S.E."/>
            <person name="Nelson D."/>
            <person name="Kucherlapati R."/>
            <person name="Weinstock G."/>
            <person name="Gibbs R.A."/>
        </authorList>
    </citation>
    <scope>NUCLEOTIDE SEQUENCE [LARGE SCALE GENOMIC DNA]</scope>
</reference>
<reference key="7">
    <citation type="submission" date="2005-07" db="EMBL/GenBank/DDBJ databases">
        <authorList>
            <person name="Mural R.J."/>
            <person name="Istrail S."/>
            <person name="Sutton G.G."/>
            <person name="Florea L."/>
            <person name="Halpern A.L."/>
            <person name="Mobarry C.M."/>
            <person name="Lippert R."/>
            <person name="Walenz B."/>
            <person name="Shatkay H."/>
            <person name="Dew I."/>
            <person name="Miller J.R."/>
            <person name="Flanigan M.J."/>
            <person name="Edwards N.J."/>
            <person name="Bolanos R."/>
            <person name="Fasulo D."/>
            <person name="Halldorsson B.V."/>
            <person name="Hannenhalli S."/>
            <person name="Turner R."/>
            <person name="Yooseph S."/>
            <person name="Lu F."/>
            <person name="Nusskern D.R."/>
            <person name="Shue B.C."/>
            <person name="Zheng X.H."/>
            <person name="Zhong F."/>
            <person name="Delcher A.L."/>
            <person name="Huson D.H."/>
            <person name="Kravitz S.A."/>
            <person name="Mouchard L."/>
            <person name="Reinert K."/>
            <person name="Remington K.A."/>
            <person name="Clark A.G."/>
            <person name="Waterman M.S."/>
            <person name="Eichler E.E."/>
            <person name="Adams M.D."/>
            <person name="Hunkapiller M.W."/>
            <person name="Myers E.W."/>
            <person name="Venter J.C."/>
        </authorList>
    </citation>
    <scope>NUCLEOTIDE SEQUENCE [LARGE SCALE GENOMIC DNA]</scope>
</reference>
<reference key="8">
    <citation type="journal article" date="2004" name="Genome Res.">
        <title>The status, quality, and expansion of the NIH full-length cDNA project: the Mammalian Gene Collection (MGC).</title>
        <authorList>
            <consortium name="The MGC Project Team"/>
        </authorList>
    </citation>
    <scope>NUCLEOTIDE SEQUENCE [LARGE SCALE MRNA] (ISOFORM 1)</scope>
    <source>
        <tissue>Placenta</tissue>
    </source>
</reference>
<reference key="9">
    <citation type="submission" date="2008-12" db="UniProtKB">
        <authorList>
            <person name="Bienvenut W.V."/>
            <person name="Zebisch A."/>
            <person name="Kolch W."/>
        </authorList>
    </citation>
    <scope>PROTEIN SEQUENCE OF 1-14</scope>
    <scope>ACETYLATION AT MET-1</scope>
    <scope>IDENTIFICATION BY MASS SPECTROMETRY</scope>
    <source>
        <tissue>Colon carcinoma</tissue>
    </source>
</reference>
<reference key="10">
    <citation type="journal article" date="2009" name="Anal. Chem.">
        <title>Lys-N and trypsin cover complementary parts of the phosphoproteome in a refined SCX-based approach.</title>
        <authorList>
            <person name="Gauci S."/>
            <person name="Helbig A.O."/>
            <person name="Slijper M."/>
            <person name="Krijgsveld J."/>
            <person name="Heck A.J."/>
            <person name="Mohammed S."/>
        </authorList>
    </citation>
    <scope>ACETYLATION [LARGE SCALE ANALYSIS] AT MET-1</scope>
    <scope>IDENTIFICATION BY MASS SPECTROMETRY [LARGE SCALE ANALYSIS]</scope>
</reference>
<reference key="11">
    <citation type="journal article" date="2011" name="BMC Syst. Biol.">
        <title>Initial characterization of the human central proteome.</title>
        <authorList>
            <person name="Burkard T.R."/>
            <person name="Planyavsky M."/>
            <person name="Kaupe I."/>
            <person name="Breitwieser F.P."/>
            <person name="Buerckstuemmer T."/>
            <person name="Bennett K.L."/>
            <person name="Superti-Furga G."/>
            <person name="Colinge J."/>
        </authorList>
    </citation>
    <scope>IDENTIFICATION BY MASS SPECTROMETRY [LARGE SCALE ANALYSIS]</scope>
</reference>
<reference key="12">
    <citation type="journal article" date="2012" name="Mol. Cell. Proteomics">
        <title>Comparative large-scale characterisation of plant vs. mammal proteins reveals similar and idiosyncratic N-alpha acetylation features.</title>
        <authorList>
            <person name="Bienvenut W.V."/>
            <person name="Sumpton D."/>
            <person name="Martinez A."/>
            <person name="Lilla S."/>
            <person name="Espagne C."/>
            <person name="Meinnel T."/>
            <person name="Giglione C."/>
        </authorList>
    </citation>
    <scope>ACETYLATION [LARGE SCALE ANALYSIS] AT MET-1</scope>
    <scope>IDENTIFICATION BY MASS SPECTROMETRY [LARGE SCALE ANALYSIS]</scope>
</reference>
<reference key="13">
    <citation type="journal article" date="2014" name="J. Proteomics">
        <title>An enzyme assisted RP-RPLC approach for in-depth analysis of human liver phosphoproteome.</title>
        <authorList>
            <person name="Bian Y."/>
            <person name="Song C."/>
            <person name="Cheng K."/>
            <person name="Dong M."/>
            <person name="Wang F."/>
            <person name="Huang J."/>
            <person name="Sun D."/>
            <person name="Wang L."/>
            <person name="Ye M."/>
            <person name="Zou H."/>
        </authorList>
    </citation>
    <scope>IDENTIFICATION BY MASS SPECTROMETRY [LARGE SCALE ANALYSIS]</scope>
    <source>
        <tissue>Liver</tissue>
    </source>
</reference>
<reference key="14">
    <citation type="journal article" date="2015" name="Proteomics">
        <title>N-terminome analysis of the human mitochondrial proteome.</title>
        <authorList>
            <person name="Vaca Jacome A.S."/>
            <person name="Rabilloud T."/>
            <person name="Schaeffer-Reiss C."/>
            <person name="Rompais M."/>
            <person name="Ayoub D."/>
            <person name="Lane L."/>
            <person name="Bairoch A."/>
            <person name="Van Dorsselaer A."/>
            <person name="Carapito C."/>
        </authorList>
    </citation>
    <scope>IDENTIFICATION BY MASS SPECTROMETRY [LARGE SCALE ANALYSIS]</scope>
</reference>
<reference key="15">
    <citation type="journal article" date="2009" name="J. Mol. Biol.">
        <title>Solution structure of human zeta-COP: direct evidences for structural similarity between COP I and clathrin-adaptor coats.</title>
        <authorList>
            <person name="Yu W."/>
            <person name="Lin J."/>
            <person name="Jin C."/>
            <person name="Xia B."/>
        </authorList>
    </citation>
    <scope>STRUCTURE BY NMR</scope>
    <scope>SUBUNIT</scope>
    <scope>MUTAGENESIS OF 58-LYS-ILE-59 AND 87-GLU-LEU-88</scope>
</reference>
<accession>P61923</accession>
<accession>B4DDX8</accession>
<accession>B4DHZ0</accession>
<accession>F8VS17</accession>
<accession>F8VWL5</accession>
<accession>Q549N6</accession>
<accession>Q9Y3C3</accession>
<sequence length="177" mass="20198">MEALILEPSLYTVKAILILDNDGDRLFAKYYDDTYPSVKEQKAFEKNIFNKTHRTDSEIALLEGLTVVYKSSIDLYFYVIGSSYENELMLMAVLNCLFDSLSQMLRKNVEKRALLENMEGLFLAVDEIVDGGVILESDPQQVVHRVALRGEDVPLTEQTVSQVLQSAKEQIKWSLLR</sequence>
<evidence type="ECO:0000250" key="1"/>
<evidence type="ECO:0000250" key="2">
    <source>
        <dbReference type="UniProtKB" id="P53600"/>
    </source>
</evidence>
<evidence type="ECO:0000269" key="3">
    <source>
    </source>
</evidence>
<evidence type="ECO:0000269" key="4">
    <source ref="9"/>
</evidence>
<evidence type="ECO:0000303" key="5">
    <source>
    </source>
</evidence>
<evidence type="ECO:0000305" key="6"/>
<evidence type="ECO:0007744" key="7">
    <source>
    </source>
</evidence>
<evidence type="ECO:0007744" key="8">
    <source>
    </source>
</evidence>
<evidence type="ECO:0007829" key="9">
    <source>
        <dbReference type="PDB" id="5MC7"/>
    </source>
</evidence>
<protein>
    <recommendedName>
        <fullName>Coatomer subunit zeta-1</fullName>
    </recommendedName>
    <alternativeName>
        <fullName>Zeta-1-coat protein</fullName>
        <shortName>Zeta-1 COP</shortName>
    </alternativeName>
</protein>
<feature type="chain" id="PRO_0000193825" description="Coatomer subunit zeta-1">
    <location>
        <begin position="1"/>
        <end position="177"/>
    </location>
</feature>
<feature type="modified residue" description="N-acetylmethionine" evidence="4 7 8">
    <location>
        <position position="1"/>
    </location>
</feature>
<feature type="splice variant" id="VSP_053675" description="In isoform 2." evidence="5">
    <original>MEALILEPSLYTVKAILILDNDGDRLFAKYYDDTYP</original>
    <variation>MMEIDFLPSTMTTPTPVSRSKRPLRRTFSTRPIGLT</variation>
    <location>
        <begin position="1"/>
        <end position="36"/>
    </location>
</feature>
<feature type="splice variant" id="VSP_055049" description="In isoform 4." evidence="6">
    <original>MEALIL</original>
    <variation>MGGFRTEGMFVSLQ</variation>
    <location>
        <begin position="1"/>
        <end position="6"/>
    </location>
</feature>
<feature type="splice variant" id="VSP_055050" description="In isoform 3." evidence="5">
    <location>
        <begin position="7"/>
        <end position="29"/>
    </location>
</feature>
<feature type="splice variant" id="VSP_053676" description="In isoform 2." evidence="5">
    <location>
        <begin position="37"/>
        <end position="87"/>
    </location>
</feature>
<feature type="splice variant" id="VSP_055051" description="In isoform 5." evidence="6">
    <location>
        <begin position="147"/>
        <end position="163"/>
    </location>
</feature>
<feature type="mutagenesis site" description="Reduced interaction with gamma subunit." evidence="3">
    <original>EI</original>
    <variation>KA</variation>
    <location>
        <begin position="58"/>
        <end position="59"/>
    </location>
</feature>
<feature type="mutagenesis site" description="Reduced interaction with gamma subunit." evidence="3">
    <original>EL</original>
    <variation>KA</variation>
    <location>
        <begin position="87"/>
        <end position="88"/>
    </location>
</feature>
<feature type="strand" evidence="9">
    <location>
        <begin position="15"/>
        <end position="20"/>
    </location>
</feature>
<feature type="strand" evidence="9">
    <location>
        <begin position="25"/>
        <end position="30"/>
    </location>
</feature>
<feature type="strand" evidence="9">
    <location>
        <begin position="32"/>
        <end position="35"/>
    </location>
</feature>
<feature type="helix" evidence="9">
    <location>
        <begin position="38"/>
        <end position="50"/>
    </location>
</feature>
<feature type="strand" evidence="9">
    <location>
        <begin position="58"/>
        <end position="62"/>
    </location>
</feature>
<feature type="strand" evidence="9">
    <location>
        <begin position="65"/>
        <end position="71"/>
    </location>
</feature>
<feature type="strand" evidence="9">
    <location>
        <begin position="73"/>
        <end position="82"/>
    </location>
</feature>
<feature type="helix" evidence="9">
    <location>
        <begin position="87"/>
        <end position="104"/>
    </location>
</feature>
<feature type="turn" evidence="9">
    <location>
        <begin position="105"/>
        <end position="107"/>
    </location>
</feature>
<feature type="helix" evidence="9">
    <location>
        <begin position="111"/>
        <end position="115"/>
    </location>
</feature>
<feature type="helix" evidence="9">
    <location>
        <begin position="118"/>
        <end position="128"/>
    </location>
</feature>
<feature type="helix" evidence="9">
    <location>
        <begin position="139"/>
        <end position="149"/>
    </location>
</feature>